<sequence>MKIYLVGGAVRDALLGLPVKDRDWVVVGSTPQEMLDAGYQQVGRDFPVFLHPQTHEEYALARTERKSGSGYTGFTCYAAPDVTLEDDLKRRDLTINALAQDDNGEIIDPYNGLGDLQNRLLRHVSPAFGEDPLRVLRVARFAARYAHLGFRIADETLALMREMTHAGELEHLTPERVWKETESALTTRNPQVFFQVLRDCGALRVLFPEIDALFGVPAPAKWHPEIDTGIHTLMTLSMAAMLSPQVDVRFATLCHDLGKGLTPPELWPRHHGHGPAGVKLVEQLCQRLRVPNEIRDLARLVAEFHDLIHTFPMLNPKTIVKLFDSIDAWRKPQRVEQLALTSEADVRGRTGFESADYPQGRWLREAWEVAQSVPTKAVVEAGFKGVEIREELTRRRIAAVASWKEQRCPKPE</sequence>
<name>CCA_ECOBW</name>
<proteinExistence type="inferred from homology"/>
<organism>
    <name type="scientific">Escherichia coli (strain K12 / MC4100 / BW2952)</name>
    <dbReference type="NCBI Taxonomy" id="595496"/>
    <lineage>
        <taxon>Bacteria</taxon>
        <taxon>Pseudomonadati</taxon>
        <taxon>Pseudomonadota</taxon>
        <taxon>Gammaproteobacteria</taxon>
        <taxon>Enterobacterales</taxon>
        <taxon>Enterobacteriaceae</taxon>
        <taxon>Escherichia</taxon>
    </lineage>
</organism>
<accession>C4ZQX3</accession>
<protein>
    <recommendedName>
        <fullName evidence="1">Multifunctional CCA protein</fullName>
    </recommendedName>
    <domain>
        <recommendedName>
            <fullName evidence="1">CCA-adding enzyme</fullName>
            <ecNumber evidence="1">2.7.7.72</ecNumber>
        </recommendedName>
        <alternativeName>
            <fullName evidence="1">CCA tRNA nucleotidyltransferase</fullName>
        </alternativeName>
        <alternativeName>
            <fullName evidence="1">tRNA CCA-pyrophosphorylase</fullName>
        </alternativeName>
        <alternativeName>
            <fullName evidence="1">tRNA adenylyl-/cytidylyl-transferase</fullName>
        </alternativeName>
        <alternativeName>
            <fullName evidence="1">tRNA nucleotidyltransferase</fullName>
        </alternativeName>
        <alternativeName>
            <fullName evidence="1">tRNA-NT</fullName>
        </alternativeName>
    </domain>
    <domain>
        <recommendedName>
            <fullName evidence="1">2'-nucleotidase</fullName>
            <ecNumber evidence="1">3.1.3.-</ecNumber>
        </recommendedName>
    </domain>
    <domain>
        <recommendedName>
            <fullName evidence="1">2',3'-cyclic phosphodiesterase</fullName>
            <ecNumber evidence="1">3.1.4.-</ecNumber>
        </recommendedName>
    </domain>
    <domain>
        <recommendedName>
            <fullName evidence="1">Phosphatase</fullName>
            <ecNumber evidence="1">3.1.3.-</ecNumber>
        </recommendedName>
    </domain>
</protein>
<dbReference type="EC" id="2.7.7.72" evidence="1"/>
<dbReference type="EC" id="3.1.3.-" evidence="1"/>
<dbReference type="EC" id="3.1.4.-" evidence="1"/>
<dbReference type="EMBL" id="CP001396">
    <property type="protein sequence ID" value="ACR63259.1"/>
    <property type="molecule type" value="Genomic_DNA"/>
</dbReference>
<dbReference type="RefSeq" id="WP_000708487.1">
    <property type="nucleotide sequence ID" value="NC_012759.1"/>
</dbReference>
<dbReference type="SMR" id="C4ZQX3"/>
<dbReference type="KEGG" id="ebw:BWG_2767"/>
<dbReference type="HOGENOM" id="CLU_015961_1_1_6"/>
<dbReference type="GO" id="GO:0005524">
    <property type="term" value="F:ATP binding"/>
    <property type="evidence" value="ECO:0007669"/>
    <property type="project" value="UniProtKB-UniRule"/>
</dbReference>
<dbReference type="GO" id="GO:0004810">
    <property type="term" value="F:CCA tRNA nucleotidyltransferase activity"/>
    <property type="evidence" value="ECO:0007669"/>
    <property type="project" value="UniProtKB-UniRule"/>
</dbReference>
<dbReference type="GO" id="GO:0004112">
    <property type="term" value="F:cyclic-nucleotide phosphodiesterase activity"/>
    <property type="evidence" value="ECO:0007669"/>
    <property type="project" value="UniProtKB-UniRule"/>
</dbReference>
<dbReference type="GO" id="GO:0000287">
    <property type="term" value="F:magnesium ion binding"/>
    <property type="evidence" value="ECO:0007669"/>
    <property type="project" value="UniProtKB-UniRule"/>
</dbReference>
<dbReference type="GO" id="GO:0016791">
    <property type="term" value="F:phosphatase activity"/>
    <property type="evidence" value="ECO:0007669"/>
    <property type="project" value="UniProtKB-UniRule"/>
</dbReference>
<dbReference type="GO" id="GO:0000049">
    <property type="term" value="F:tRNA binding"/>
    <property type="evidence" value="ECO:0007669"/>
    <property type="project" value="UniProtKB-UniRule"/>
</dbReference>
<dbReference type="GO" id="GO:0042245">
    <property type="term" value="P:RNA repair"/>
    <property type="evidence" value="ECO:0007669"/>
    <property type="project" value="UniProtKB-KW"/>
</dbReference>
<dbReference type="GO" id="GO:0001680">
    <property type="term" value="P:tRNA 3'-terminal CCA addition"/>
    <property type="evidence" value="ECO:0007669"/>
    <property type="project" value="UniProtKB-UniRule"/>
</dbReference>
<dbReference type="CDD" id="cd00077">
    <property type="entry name" value="HDc"/>
    <property type="match status" value="1"/>
</dbReference>
<dbReference type="CDD" id="cd05398">
    <property type="entry name" value="NT_ClassII-CCAase"/>
    <property type="match status" value="1"/>
</dbReference>
<dbReference type="FunFam" id="1.10.3090.10:FF:000001">
    <property type="entry name" value="Multifunctional CCA protein"/>
    <property type="match status" value="1"/>
</dbReference>
<dbReference type="FunFam" id="3.30.460.10:FF:000016">
    <property type="entry name" value="Multifunctional CCA protein"/>
    <property type="match status" value="1"/>
</dbReference>
<dbReference type="Gene3D" id="3.30.460.10">
    <property type="entry name" value="Beta Polymerase, domain 2"/>
    <property type="match status" value="1"/>
</dbReference>
<dbReference type="Gene3D" id="1.10.3090.10">
    <property type="entry name" value="cca-adding enzyme, domain 2"/>
    <property type="match status" value="1"/>
</dbReference>
<dbReference type="HAMAP" id="MF_01261">
    <property type="entry name" value="CCA_bact_type1"/>
    <property type="match status" value="1"/>
</dbReference>
<dbReference type="HAMAP" id="MF_01262">
    <property type="entry name" value="CCA_bact_type2"/>
    <property type="match status" value="1"/>
</dbReference>
<dbReference type="InterPro" id="IPR012006">
    <property type="entry name" value="CCA_bact"/>
</dbReference>
<dbReference type="InterPro" id="IPR003607">
    <property type="entry name" value="HD/PDEase_dom"/>
</dbReference>
<dbReference type="InterPro" id="IPR006674">
    <property type="entry name" value="HD_domain"/>
</dbReference>
<dbReference type="InterPro" id="IPR043519">
    <property type="entry name" value="NT_sf"/>
</dbReference>
<dbReference type="InterPro" id="IPR002646">
    <property type="entry name" value="PolA_pol_head_dom"/>
</dbReference>
<dbReference type="InterPro" id="IPR032828">
    <property type="entry name" value="PolyA_RNA-bd"/>
</dbReference>
<dbReference type="InterPro" id="IPR050124">
    <property type="entry name" value="tRNA_CCA-adding_enzyme"/>
</dbReference>
<dbReference type="NCBIfam" id="NF008137">
    <property type="entry name" value="PRK10885.1"/>
    <property type="match status" value="1"/>
</dbReference>
<dbReference type="PANTHER" id="PTHR47545">
    <property type="entry name" value="MULTIFUNCTIONAL CCA PROTEIN"/>
    <property type="match status" value="1"/>
</dbReference>
<dbReference type="PANTHER" id="PTHR47545:SF1">
    <property type="entry name" value="MULTIFUNCTIONAL CCA PROTEIN"/>
    <property type="match status" value="1"/>
</dbReference>
<dbReference type="Pfam" id="PF01966">
    <property type="entry name" value="HD"/>
    <property type="match status" value="1"/>
</dbReference>
<dbReference type="Pfam" id="PF01743">
    <property type="entry name" value="PolyA_pol"/>
    <property type="match status" value="1"/>
</dbReference>
<dbReference type="Pfam" id="PF12627">
    <property type="entry name" value="PolyA_pol_RNAbd"/>
    <property type="match status" value="1"/>
</dbReference>
<dbReference type="PIRSF" id="PIRSF000813">
    <property type="entry name" value="CCA_bact"/>
    <property type="match status" value="1"/>
</dbReference>
<dbReference type="SUPFAM" id="SSF81301">
    <property type="entry name" value="Nucleotidyltransferase"/>
    <property type="match status" value="1"/>
</dbReference>
<dbReference type="SUPFAM" id="SSF81891">
    <property type="entry name" value="Poly A polymerase C-terminal region-like"/>
    <property type="match status" value="1"/>
</dbReference>
<dbReference type="PROSITE" id="PS51831">
    <property type="entry name" value="HD"/>
    <property type="match status" value="1"/>
</dbReference>
<reference key="1">
    <citation type="journal article" date="2009" name="J. Bacteriol.">
        <title>Genomic sequencing reveals regulatory mutations and recombinational events in the widely used MC4100 lineage of Escherichia coli K-12.</title>
        <authorList>
            <person name="Ferenci T."/>
            <person name="Zhou Z."/>
            <person name="Betteridge T."/>
            <person name="Ren Y."/>
            <person name="Liu Y."/>
            <person name="Feng L."/>
            <person name="Reeves P.R."/>
            <person name="Wang L."/>
        </authorList>
    </citation>
    <scope>NUCLEOTIDE SEQUENCE [LARGE SCALE GENOMIC DNA]</scope>
    <source>
        <strain>K12 / MC4100 / BW2952</strain>
    </source>
</reference>
<feature type="chain" id="PRO_1000214130" description="Multifunctional CCA protein">
    <location>
        <begin position="1"/>
        <end position="412"/>
    </location>
</feature>
<feature type="domain" description="HD" evidence="1">
    <location>
        <begin position="228"/>
        <end position="329"/>
    </location>
</feature>
<feature type="binding site" evidence="1">
    <location>
        <position position="8"/>
    </location>
    <ligand>
        <name>ATP</name>
        <dbReference type="ChEBI" id="CHEBI:30616"/>
    </ligand>
</feature>
<feature type="binding site" evidence="1">
    <location>
        <position position="8"/>
    </location>
    <ligand>
        <name>CTP</name>
        <dbReference type="ChEBI" id="CHEBI:37563"/>
    </ligand>
</feature>
<feature type="binding site" evidence="1">
    <location>
        <position position="11"/>
    </location>
    <ligand>
        <name>ATP</name>
        <dbReference type="ChEBI" id="CHEBI:30616"/>
    </ligand>
</feature>
<feature type="binding site" evidence="1">
    <location>
        <position position="11"/>
    </location>
    <ligand>
        <name>CTP</name>
        <dbReference type="ChEBI" id="CHEBI:37563"/>
    </ligand>
</feature>
<feature type="binding site" evidence="1">
    <location>
        <position position="21"/>
    </location>
    <ligand>
        <name>Mg(2+)</name>
        <dbReference type="ChEBI" id="CHEBI:18420"/>
    </ligand>
</feature>
<feature type="binding site" evidence="1">
    <location>
        <position position="23"/>
    </location>
    <ligand>
        <name>Mg(2+)</name>
        <dbReference type="ChEBI" id="CHEBI:18420"/>
    </ligand>
</feature>
<feature type="binding site" evidence="1">
    <location>
        <position position="91"/>
    </location>
    <ligand>
        <name>ATP</name>
        <dbReference type="ChEBI" id="CHEBI:30616"/>
    </ligand>
</feature>
<feature type="binding site" evidence="1">
    <location>
        <position position="91"/>
    </location>
    <ligand>
        <name>CTP</name>
        <dbReference type="ChEBI" id="CHEBI:37563"/>
    </ligand>
</feature>
<feature type="binding site" evidence="1">
    <location>
        <position position="137"/>
    </location>
    <ligand>
        <name>ATP</name>
        <dbReference type="ChEBI" id="CHEBI:30616"/>
    </ligand>
</feature>
<feature type="binding site" evidence="1">
    <location>
        <position position="137"/>
    </location>
    <ligand>
        <name>CTP</name>
        <dbReference type="ChEBI" id="CHEBI:37563"/>
    </ligand>
</feature>
<feature type="binding site" evidence="1">
    <location>
        <position position="140"/>
    </location>
    <ligand>
        <name>ATP</name>
        <dbReference type="ChEBI" id="CHEBI:30616"/>
    </ligand>
</feature>
<feature type="binding site" evidence="1">
    <location>
        <position position="140"/>
    </location>
    <ligand>
        <name>CTP</name>
        <dbReference type="ChEBI" id="CHEBI:37563"/>
    </ligand>
</feature>
<comment type="function">
    <text evidence="1">Catalyzes the addition and repair of the essential 3'-terminal CCA sequence in tRNAs without using a nucleic acid template. Adds these three nucleotides in the order of C, C, and A to the tRNA nucleotide-73, using CTP and ATP as substrates and producing inorganic pyrophosphate. tRNA 3'-terminal CCA addition is required both for tRNA processing and repair. Also involved in tRNA surveillance by mediating tandem CCA addition to generate a CCACCA at the 3' terminus of unstable tRNAs. While stable tRNAs receive only 3'-terminal CCA, unstable tRNAs are marked with CCACCA and rapidly degraded.</text>
</comment>
<comment type="catalytic activity">
    <reaction evidence="1">
        <text>a tRNA precursor + 2 CTP + ATP = a tRNA with a 3' CCA end + 3 diphosphate</text>
        <dbReference type="Rhea" id="RHEA:14433"/>
        <dbReference type="Rhea" id="RHEA-COMP:10465"/>
        <dbReference type="Rhea" id="RHEA-COMP:10468"/>
        <dbReference type="ChEBI" id="CHEBI:30616"/>
        <dbReference type="ChEBI" id="CHEBI:33019"/>
        <dbReference type="ChEBI" id="CHEBI:37563"/>
        <dbReference type="ChEBI" id="CHEBI:74896"/>
        <dbReference type="ChEBI" id="CHEBI:83071"/>
        <dbReference type="EC" id="2.7.7.72"/>
    </reaction>
</comment>
<comment type="catalytic activity">
    <reaction evidence="1">
        <text>a tRNA with a 3' CCA end + 2 CTP + ATP = a tRNA with a 3' CCACCA end + 3 diphosphate</text>
        <dbReference type="Rhea" id="RHEA:76235"/>
        <dbReference type="Rhea" id="RHEA-COMP:10468"/>
        <dbReference type="Rhea" id="RHEA-COMP:18655"/>
        <dbReference type="ChEBI" id="CHEBI:30616"/>
        <dbReference type="ChEBI" id="CHEBI:33019"/>
        <dbReference type="ChEBI" id="CHEBI:37563"/>
        <dbReference type="ChEBI" id="CHEBI:83071"/>
        <dbReference type="ChEBI" id="CHEBI:195187"/>
    </reaction>
    <physiologicalReaction direction="left-to-right" evidence="1">
        <dbReference type="Rhea" id="RHEA:76236"/>
    </physiologicalReaction>
</comment>
<comment type="cofactor">
    <cofactor evidence="1">
        <name>Mg(2+)</name>
        <dbReference type="ChEBI" id="CHEBI:18420"/>
    </cofactor>
    <text evidence="1">Magnesium is required for nucleotidyltransferase activity.</text>
</comment>
<comment type="cofactor">
    <cofactor evidence="1">
        <name>Ni(2+)</name>
        <dbReference type="ChEBI" id="CHEBI:49786"/>
    </cofactor>
    <text evidence="1">Nickel for phosphatase activity.</text>
</comment>
<comment type="subunit">
    <text evidence="1">Monomer. Can also form homodimers and oligomers.</text>
</comment>
<comment type="domain">
    <text evidence="1">Comprises two domains: an N-terminal domain containing the nucleotidyltransferase activity and a C-terminal HD domain associated with both phosphodiesterase and phosphatase activities.</text>
</comment>
<comment type="miscellaneous">
    <text evidence="1">A single active site specifically recognizes both ATP and CTP and is responsible for their addition.</text>
</comment>
<comment type="similarity">
    <text evidence="1">Belongs to the tRNA nucleotidyltransferase/poly(A) polymerase family. Bacterial CCA-adding enzyme type 1 subfamily.</text>
</comment>
<gene>
    <name evidence="1" type="primary">cca</name>
    <name type="ordered locus">BWG_2767</name>
</gene>
<keyword id="KW-0067">ATP-binding</keyword>
<keyword id="KW-0378">Hydrolase</keyword>
<keyword id="KW-0460">Magnesium</keyword>
<keyword id="KW-0479">Metal-binding</keyword>
<keyword id="KW-0511">Multifunctional enzyme</keyword>
<keyword id="KW-0533">Nickel</keyword>
<keyword id="KW-0547">Nucleotide-binding</keyword>
<keyword id="KW-0548">Nucleotidyltransferase</keyword>
<keyword id="KW-0692">RNA repair</keyword>
<keyword id="KW-0694">RNA-binding</keyword>
<keyword id="KW-0808">Transferase</keyword>
<keyword id="KW-0819">tRNA processing</keyword>
<evidence type="ECO:0000255" key="1">
    <source>
        <dbReference type="HAMAP-Rule" id="MF_01261"/>
    </source>
</evidence>